<reference key="1">
    <citation type="journal article" date="1996" name="Curr. Genet.">
        <title>The nuclear Kluyveromyces lactis MRF1 gene encodes a mitochondrial class I peptide chain release factor that is important for cell viability.</title>
        <authorList>
            <person name="Pel H.J."/>
            <person name="Rozenfeld S."/>
            <person name="Bolotin-Fukuhara M."/>
        </authorList>
    </citation>
    <scope>NUCLEOTIDE SEQUENCE [GENOMIC DNA]</scope>
    <source>
        <strain>ATCC 8585 / CBS 2359 / DSM 70799 / NBRC 1267 / NRRL Y-1140 / WM37</strain>
    </source>
</reference>
<reference key="2">
    <citation type="journal article" date="2004" name="Nature">
        <title>Genome evolution in yeasts.</title>
        <authorList>
            <person name="Dujon B."/>
            <person name="Sherman D."/>
            <person name="Fischer G."/>
            <person name="Durrens P."/>
            <person name="Casaregola S."/>
            <person name="Lafontaine I."/>
            <person name="de Montigny J."/>
            <person name="Marck C."/>
            <person name="Neuveglise C."/>
            <person name="Talla E."/>
            <person name="Goffard N."/>
            <person name="Frangeul L."/>
            <person name="Aigle M."/>
            <person name="Anthouard V."/>
            <person name="Babour A."/>
            <person name="Barbe V."/>
            <person name="Barnay S."/>
            <person name="Blanchin S."/>
            <person name="Beckerich J.-M."/>
            <person name="Beyne E."/>
            <person name="Bleykasten C."/>
            <person name="Boisrame A."/>
            <person name="Boyer J."/>
            <person name="Cattolico L."/>
            <person name="Confanioleri F."/>
            <person name="de Daruvar A."/>
            <person name="Despons L."/>
            <person name="Fabre E."/>
            <person name="Fairhead C."/>
            <person name="Ferry-Dumazet H."/>
            <person name="Groppi A."/>
            <person name="Hantraye F."/>
            <person name="Hennequin C."/>
            <person name="Jauniaux N."/>
            <person name="Joyet P."/>
            <person name="Kachouri R."/>
            <person name="Kerrest A."/>
            <person name="Koszul R."/>
            <person name="Lemaire M."/>
            <person name="Lesur I."/>
            <person name="Ma L."/>
            <person name="Muller H."/>
            <person name="Nicaud J.-M."/>
            <person name="Nikolski M."/>
            <person name="Oztas S."/>
            <person name="Ozier-Kalogeropoulos O."/>
            <person name="Pellenz S."/>
            <person name="Potier S."/>
            <person name="Richard G.-F."/>
            <person name="Straub M.-L."/>
            <person name="Suleau A."/>
            <person name="Swennen D."/>
            <person name="Tekaia F."/>
            <person name="Wesolowski-Louvel M."/>
            <person name="Westhof E."/>
            <person name="Wirth B."/>
            <person name="Zeniou-Meyer M."/>
            <person name="Zivanovic Y."/>
            <person name="Bolotin-Fukuhara M."/>
            <person name="Thierry A."/>
            <person name="Bouchier C."/>
            <person name="Caudron B."/>
            <person name="Scarpelli C."/>
            <person name="Gaillardin C."/>
            <person name="Weissenbach J."/>
            <person name="Wincker P."/>
            <person name="Souciet J.-L."/>
        </authorList>
    </citation>
    <scope>NUCLEOTIDE SEQUENCE [LARGE SCALE GENOMIC DNA]</scope>
    <source>
        <strain>ATCC 8585 / CBS 2359 / DSM 70799 / NBRC 1267 / NRRL Y-1140 / WM37</strain>
    </source>
</reference>
<proteinExistence type="inferred from homology"/>
<protein>
    <recommendedName>
        <fullName>Peptide chain release factor 1, mitochondrial</fullName>
        <shortName>MRF-1</shortName>
        <shortName>MtRF-1</shortName>
    </recommendedName>
</protein>
<dbReference type="EMBL" id="U19586">
    <property type="protein sequence ID" value="AAB18362.1"/>
    <property type="molecule type" value="Genomic_DNA"/>
</dbReference>
<dbReference type="EMBL" id="CR382125">
    <property type="protein sequence ID" value="CAG99704.1"/>
    <property type="molecule type" value="Genomic_DNA"/>
</dbReference>
<dbReference type="PIR" id="S70354">
    <property type="entry name" value="S70354"/>
</dbReference>
<dbReference type="RefSeq" id="XP_454617.1">
    <property type="nucleotide sequence ID" value="XM_454617.1"/>
</dbReference>
<dbReference type="SMR" id="P41767"/>
<dbReference type="FunCoup" id="P41767">
    <property type="interactions" value="735"/>
</dbReference>
<dbReference type="STRING" id="284590.P41767"/>
<dbReference type="PaxDb" id="284590-P41767"/>
<dbReference type="KEGG" id="kla:KLLA0_E14807g"/>
<dbReference type="eggNOG" id="KOG2726">
    <property type="taxonomic scope" value="Eukaryota"/>
</dbReference>
<dbReference type="HOGENOM" id="CLU_036856_0_4_1"/>
<dbReference type="InParanoid" id="P41767"/>
<dbReference type="OMA" id="DHRVGFK"/>
<dbReference type="Proteomes" id="UP000000598">
    <property type="component" value="Chromosome E"/>
</dbReference>
<dbReference type="GO" id="GO:0005739">
    <property type="term" value="C:mitochondrion"/>
    <property type="evidence" value="ECO:0007669"/>
    <property type="project" value="UniProtKB-SubCell"/>
</dbReference>
<dbReference type="GO" id="GO:0003747">
    <property type="term" value="F:translation release factor activity"/>
    <property type="evidence" value="ECO:0007669"/>
    <property type="project" value="InterPro"/>
</dbReference>
<dbReference type="GO" id="GO:0032543">
    <property type="term" value="P:mitochondrial translation"/>
    <property type="evidence" value="ECO:0007669"/>
    <property type="project" value="UniProtKB-ARBA"/>
</dbReference>
<dbReference type="FunFam" id="3.30.160.20:FF:000004">
    <property type="entry name" value="Peptide chain release factor 1"/>
    <property type="match status" value="1"/>
</dbReference>
<dbReference type="Gene3D" id="3.30.160.20">
    <property type="match status" value="1"/>
</dbReference>
<dbReference type="Gene3D" id="3.30.70.1660">
    <property type="match status" value="1"/>
</dbReference>
<dbReference type="Gene3D" id="6.10.140.1950">
    <property type="match status" value="1"/>
</dbReference>
<dbReference type="InterPro" id="IPR005139">
    <property type="entry name" value="PCRF"/>
</dbReference>
<dbReference type="InterPro" id="IPR000352">
    <property type="entry name" value="Pep_chain_release_fac_I"/>
</dbReference>
<dbReference type="InterPro" id="IPR045853">
    <property type="entry name" value="Pep_chain_release_fac_I_sf"/>
</dbReference>
<dbReference type="InterPro" id="IPR050057">
    <property type="entry name" value="Prokaryotic/Mito_RF"/>
</dbReference>
<dbReference type="PANTHER" id="PTHR43804">
    <property type="entry name" value="LD18447P"/>
    <property type="match status" value="1"/>
</dbReference>
<dbReference type="PANTHER" id="PTHR43804:SF7">
    <property type="entry name" value="LD18447P"/>
    <property type="match status" value="1"/>
</dbReference>
<dbReference type="Pfam" id="PF03462">
    <property type="entry name" value="PCRF"/>
    <property type="match status" value="1"/>
</dbReference>
<dbReference type="Pfam" id="PF00472">
    <property type="entry name" value="RF-1"/>
    <property type="match status" value="1"/>
</dbReference>
<dbReference type="SMART" id="SM00937">
    <property type="entry name" value="PCRF"/>
    <property type="match status" value="1"/>
</dbReference>
<dbReference type="SUPFAM" id="SSF75620">
    <property type="entry name" value="Release factor"/>
    <property type="match status" value="1"/>
</dbReference>
<dbReference type="PROSITE" id="PS00745">
    <property type="entry name" value="RF_PROK_I"/>
    <property type="match status" value="1"/>
</dbReference>
<keyword id="KW-0488">Methylation</keyword>
<keyword id="KW-0496">Mitochondrion</keyword>
<keyword id="KW-0648">Protein biosynthesis</keyword>
<keyword id="KW-1185">Reference proteome</keyword>
<keyword id="KW-0809">Transit peptide</keyword>
<name>RF1M_KLULA</name>
<organism>
    <name type="scientific">Kluyveromyces lactis (strain ATCC 8585 / CBS 2359 / DSM 70799 / NBRC 1267 / NRRL Y-1140 / WM37)</name>
    <name type="common">Yeast</name>
    <name type="synonym">Candida sphaerica</name>
    <dbReference type="NCBI Taxonomy" id="284590"/>
    <lineage>
        <taxon>Eukaryota</taxon>
        <taxon>Fungi</taxon>
        <taxon>Dikarya</taxon>
        <taxon>Ascomycota</taxon>
        <taxon>Saccharomycotina</taxon>
        <taxon>Saccharomycetes</taxon>
        <taxon>Saccharomycetales</taxon>
        <taxon>Saccharomycetaceae</taxon>
        <taxon>Kluyveromyces</taxon>
    </lineage>
</organism>
<comment type="function">
    <text>Mitochondrial peptide chain release factor that directs the termination of translation in response to the peptide chain termination codons UAA and UAG.</text>
</comment>
<comment type="subcellular location">
    <subcellularLocation>
        <location>Mitochondrion</location>
    </subcellularLocation>
</comment>
<comment type="PTM">
    <text evidence="1">Methylation of glutamine in the GGQ triplet is conserved from bacteria to mammals.</text>
</comment>
<comment type="similarity">
    <text evidence="4">Belongs to the prokaryotic/mitochondrial release factor family.</text>
</comment>
<sequence length="396" mass="44995">MISKLFGRGKFFRNVALQVRFNSSEAVEFRPLHSSLISRAELYVNELRELEDLLSQGGSFDLEKQKNFAKLSTIVDSYSKYREEVNQYKELQEILELDPSLREEAEADIAALLPDLNKTGDSLLNKLLPPHPFADKPSILELRPGVGGSEAMIFTQDLLNMYINYANYHKWKWNLISKTENASGSGVLEAILNIDEPGSYDKLKFEAGVHRVQRVPATESKGRTHTSTAAVIVLPKMGEESESDAYERTFKPDEIRIDVMRASGKGGQHVNTTDSAVRLTHYPSGIVISMQEERSQHRNKAKAFAILRARLAEKERLEKEEKERNARKDQVSTTDRSDKIRTYNYPQNRITDHRCGFTLYDIEGVMKGERLDDVIDAMDAFSSEQKAKQLLQDMSA</sequence>
<accession>P41767</accession>
<feature type="transit peptide" description="Mitochondrion" evidence="2">
    <location>
        <begin position="1"/>
        <end status="unknown"/>
    </location>
</feature>
<feature type="chain" id="PRO_0000030336" description="Peptide chain release factor 1, mitochondrial">
    <location>
        <begin status="unknown"/>
        <end position="396"/>
    </location>
</feature>
<feature type="region of interest" description="Disordered" evidence="3">
    <location>
        <begin position="317"/>
        <end position="340"/>
    </location>
</feature>
<feature type="modified residue" description="N5-methylglutamine" evidence="1">
    <location>
        <position position="268"/>
    </location>
</feature>
<evidence type="ECO:0000250" key="1"/>
<evidence type="ECO:0000255" key="2"/>
<evidence type="ECO:0000256" key="3">
    <source>
        <dbReference type="SAM" id="MobiDB-lite"/>
    </source>
</evidence>
<evidence type="ECO:0000305" key="4"/>
<gene>
    <name type="primary">MRF1</name>
    <name type="ordered locus">KLLA0E14850g</name>
</gene>